<evidence type="ECO:0000255" key="1">
    <source>
        <dbReference type="HAMAP-Rule" id="MF_00061"/>
    </source>
</evidence>
<gene>
    <name evidence="1" type="primary">ispE</name>
    <name type="ordered locus">Daci_5432</name>
</gene>
<accession>A9BP16</accession>
<name>ISPE_DELAS</name>
<comment type="function">
    <text evidence="1">Catalyzes the phosphorylation of the position 2 hydroxy group of 4-diphosphocytidyl-2C-methyl-D-erythritol.</text>
</comment>
<comment type="catalytic activity">
    <reaction evidence="1">
        <text>4-CDP-2-C-methyl-D-erythritol + ATP = 4-CDP-2-C-methyl-D-erythritol 2-phosphate + ADP + H(+)</text>
        <dbReference type="Rhea" id="RHEA:18437"/>
        <dbReference type="ChEBI" id="CHEBI:15378"/>
        <dbReference type="ChEBI" id="CHEBI:30616"/>
        <dbReference type="ChEBI" id="CHEBI:57823"/>
        <dbReference type="ChEBI" id="CHEBI:57919"/>
        <dbReference type="ChEBI" id="CHEBI:456216"/>
        <dbReference type="EC" id="2.7.1.148"/>
    </reaction>
</comment>
<comment type="pathway">
    <text evidence="1">Isoprenoid biosynthesis; isopentenyl diphosphate biosynthesis via DXP pathway; isopentenyl diphosphate from 1-deoxy-D-xylulose 5-phosphate: step 3/6.</text>
</comment>
<comment type="similarity">
    <text evidence="1">Belongs to the GHMP kinase family. IspE subfamily.</text>
</comment>
<feature type="chain" id="PRO_1000092082" description="4-diphosphocytidyl-2-C-methyl-D-erythritol kinase">
    <location>
        <begin position="1"/>
        <end position="287"/>
    </location>
</feature>
<feature type="active site" evidence="1">
    <location>
        <position position="12"/>
    </location>
</feature>
<feature type="active site" evidence="1">
    <location>
        <position position="137"/>
    </location>
</feature>
<feature type="binding site" evidence="1">
    <location>
        <begin position="95"/>
        <end position="105"/>
    </location>
    <ligand>
        <name>ATP</name>
        <dbReference type="ChEBI" id="CHEBI:30616"/>
    </ligand>
</feature>
<protein>
    <recommendedName>
        <fullName evidence="1">4-diphosphocytidyl-2-C-methyl-D-erythritol kinase</fullName>
        <shortName evidence="1">CMK</shortName>
        <ecNumber evidence="1">2.7.1.148</ecNumber>
    </recommendedName>
    <alternativeName>
        <fullName evidence="1">4-(cytidine-5'-diphospho)-2-C-methyl-D-erythritol kinase</fullName>
    </alternativeName>
</protein>
<dbReference type="EC" id="2.7.1.148" evidence="1"/>
<dbReference type="EMBL" id="CP000884">
    <property type="protein sequence ID" value="ABX38061.1"/>
    <property type="molecule type" value="Genomic_DNA"/>
</dbReference>
<dbReference type="RefSeq" id="WP_012207230.1">
    <property type="nucleotide sequence ID" value="NC_010002.1"/>
</dbReference>
<dbReference type="SMR" id="A9BP16"/>
<dbReference type="STRING" id="398578.Daci_5432"/>
<dbReference type="GeneID" id="24114646"/>
<dbReference type="KEGG" id="dac:Daci_5432"/>
<dbReference type="eggNOG" id="COG1947">
    <property type="taxonomic scope" value="Bacteria"/>
</dbReference>
<dbReference type="HOGENOM" id="CLU_053057_3_0_4"/>
<dbReference type="UniPathway" id="UPA00056">
    <property type="reaction ID" value="UER00094"/>
</dbReference>
<dbReference type="Proteomes" id="UP000000784">
    <property type="component" value="Chromosome"/>
</dbReference>
<dbReference type="GO" id="GO:0050515">
    <property type="term" value="F:4-(cytidine 5'-diphospho)-2-C-methyl-D-erythritol kinase activity"/>
    <property type="evidence" value="ECO:0007669"/>
    <property type="project" value="UniProtKB-UniRule"/>
</dbReference>
<dbReference type="GO" id="GO:0005524">
    <property type="term" value="F:ATP binding"/>
    <property type="evidence" value="ECO:0007669"/>
    <property type="project" value="UniProtKB-UniRule"/>
</dbReference>
<dbReference type="GO" id="GO:0019288">
    <property type="term" value="P:isopentenyl diphosphate biosynthetic process, methylerythritol 4-phosphate pathway"/>
    <property type="evidence" value="ECO:0007669"/>
    <property type="project" value="UniProtKB-UniRule"/>
</dbReference>
<dbReference type="GO" id="GO:0016114">
    <property type="term" value="P:terpenoid biosynthetic process"/>
    <property type="evidence" value="ECO:0007669"/>
    <property type="project" value="InterPro"/>
</dbReference>
<dbReference type="Gene3D" id="3.30.230.10">
    <property type="match status" value="1"/>
</dbReference>
<dbReference type="Gene3D" id="3.30.70.890">
    <property type="entry name" value="GHMP kinase, C-terminal domain"/>
    <property type="match status" value="1"/>
</dbReference>
<dbReference type="HAMAP" id="MF_00061">
    <property type="entry name" value="IspE"/>
    <property type="match status" value="1"/>
</dbReference>
<dbReference type="InterPro" id="IPR013750">
    <property type="entry name" value="GHMP_kinase_C_dom"/>
</dbReference>
<dbReference type="InterPro" id="IPR036554">
    <property type="entry name" value="GHMP_kinase_C_sf"/>
</dbReference>
<dbReference type="InterPro" id="IPR006204">
    <property type="entry name" value="GHMP_kinase_N_dom"/>
</dbReference>
<dbReference type="InterPro" id="IPR004424">
    <property type="entry name" value="IspE"/>
</dbReference>
<dbReference type="InterPro" id="IPR020568">
    <property type="entry name" value="Ribosomal_Su5_D2-typ_SF"/>
</dbReference>
<dbReference type="InterPro" id="IPR014721">
    <property type="entry name" value="Ribsml_uS5_D2-typ_fold_subgr"/>
</dbReference>
<dbReference type="NCBIfam" id="TIGR00154">
    <property type="entry name" value="ispE"/>
    <property type="match status" value="1"/>
</dbReference>
<dbReference type="PANTHER" id="PTHR43527">
    <property type="entry name" value="4-DIPHOSPHOCYTIDYL-2-C-METHYL-D-ERYTHRITOL KINASE, CHLOROPLASTIC"/>
    <property type="match status" value="1"/>
</dbReference>
<dbReference type="PANTHER" id="PTHR43527:SF2">
    <property type="entry name" value="4-DIPHOSPHOCYTIDYL-2-C-METHYL-D-ERYTHRITOL KINASE, CHLOROPLASTIC"/>
    <property type="match status" value="1"/>
</dbReference>
<dbReference type="Pfam" id="PF08544">
    <property type="entry name" value="GHMP_kinases_C"/>
    <property type="match status" value="1"/>
</dbReference>
<dbReference type="Pfam" id="PF00288">
    <property type="entry name" value="GHMP_kinases_N"/>
    <property type="match status" value="1"/>
</dbReference>
<dbReference type="PIRSF" id="PIRSF010376">
    <property type="entry name" value="IspE"/>
    <property type="match status" value="1"/>
</dbReference>
<dbReference type="SUPFAM" id="SSF55060">
    <property type="entry name" value="GHMP Kinase, C-terminal domain"/>
    <property type="match status" value="1"/>
</dbReference>
<dbReference type="SUPFAM" id="SSF54211">
    <property type="entry name" value="Ribosomal protein S5 domain 2-like"/>
    <property type="match status" value="1"/>
</dbReference>
<sequence>MRSLHDVPAPAKLNLFLHITGRRADGYHLLQSVFMLLDWHDTLHFDRRGDGQISREDLSGMALPADDLIVRAARALQQATGCRAGVHIGVEKRLPAQAGMGGGSSDAASTLIALNRLWQLNLTRRELQRIALDLGADVPFFLCGNSAWVEGIGEHITPLEQAHALPPQRFVVVKPEAGLETLSIFRDATLKRDHAHATIEDFAADHYGFGQNDLQPVAERLQPEVKKAIDWLNSLKLHARMTGSGSAVFAPLTQTIDLKDAPGAWNVRVCSNLQAHPLKDWLKDESL</sequence>
<keyword id="KW-0067">ATP-binding</keyword>
<keyword id="KW-0414">Isoprene biosynthesis</keyword>
<keyword id="KW-0418">Kinase</keyword>
<keyword id="KW-0547">Nucleotide-binding</keyword>
<keyword id="KW-1185">Reference proteome</keyword>
<keyword id="KW-0808">Transferase</keyword>
<organism>
    <name type="scientific">Delftia acidovorans (strain DSM 14801 / SPH-1)</name>
    <dbReference type="NCBI Taxonomy" id="398578"/>
    <lineage>
        <taxon>Bacteria</taxon>
        <taxon>Pseudomonadati</taxon>
        <taxon>Pseudomonadota</taxon>
        <taxon>Betaproteobacteria</taxon>
        <taxon>Burkholderiales</taxon>
        <taxon>Comamonadaceae</taxon>
        <taxon>Delftia</taxon>
    </lineage>
</organism>
<proteinExistence type="inferred from homology"/>
<reference key="1">
    <citation type="submission" date="2007-11" db="EMBL/GenBank/DDBJ databases">
        <title>Complete sequence of Delftia acidovorans DSM 14801 / SPH-1.</title>
        <authorList>
            <person name="Copeland A."/>
            <person name="Lucas S."/>
            <person name="Lapidus A."/>
            <person name="Barry K."/>
            <person name="Glavina del Rio T."/>
            <person name="Dalin E."/>
            <person name="Tice H."/>
            <person name="Pitluck S."/>
            <person name="Lowry S."/>
            <person name="Clum A."/>
            <person name="Schmutz J."/>
            <person name="Larimer F."/>
            <person name="Land M."/>
            <person name="Hauser L."/>
            <person name="Kyrpides N."/>
            <person name="Kim E."/>
            <person name="Schleheck D."/>
            <person name="Richardson P."/>
        </authorList>
    </citation>
    <scope>NUCLEOTIDE SEQUENCE [LARGE SCALE GENOMIC DNA]</scope>
    <source>
        <strain>DSM 14801 / SPH-1</strain>
    </source>
</reference>